<comment type="function">
    <text evidence="2 3 6">Part of the gene cluster that mediates the biosynthesis of KK-1, a novel cyclic depsipeptide with 10 residues which is a promising active compound with high activity against many plant pathogens, especially Botrytis cinerea (PubMed:29686660, PubMed:37746209). The role of kk1D in KK-1 biosynthesis has still to be determined (Probable). The nonribosomal peptide synthetase (NRPS) kk1B catalyzes the elongation and cyclization of the decapeptide chain composed of 1 D-lactic acid residue (D-Lac), 1 pipecolic acid residue (Pip), 1 aspartic acid residue (Asp), 1 isoleucine residue (Ile), 1 glycine residue (Gly), 1 tyrosine residue (Tyr) and 4 valine residues (Val). The Asp, Ile and 3 Val residues are N-methylated by the 5 methyltransferase domains from the NRPS (found in modules 3, 5, 6, 7 and 9), whereas the Tyr residue is O-methylated by the cluster encoded O-methyltransferase kk1A. The thioesterase kk1J is likely to be involved in the corrective mechanism of peptide chain synthesis. The D-lactate dehydrogenase kk1H is involved in the synthesis of D-lactic acid from pyruvic acid, which is recognized by the A domain of the first kk1B module. The pyrroline-5-carboxylate reductase kk1I is involved in the synthesis of the L-pipecolic acid residue of KK-1 from delta-1-pyrroline-5-carboxylate (P5C), a metabolic intermediate of lysine. It is still unclear how kk1C and kk1D are involved in the production of KK-1 (Probable).</text>
</comment>
<comment type="pathway">
    <text evidence="2 3">Secondary metabolite biosynthesis.</text>
</comment>
<comment type="induction">
    <text evidence="3">Expression is positively regulated by the KK-1 cluster-specific transcription factor kk1F.</text>
</comment>
<comment type="disruption phenotype">
    <text evidence="3">Abolishes completely the production of KK-1.</text>
</comment>
<proteinExistence type="evidence at transcript level"/>
<keyword id="KW-0045">Antibiotic biosynthesis</keyword>
<reference key="1">
    <citation type="journal article" date="2018" name="Front. Microbiol.">
        <title>Heterologous production of a novel cyclic peptide compound, KK-1, in Aspergillus oryzae.</title>
        <authorList>
            <person name="Yoshimi A."/>
            <person name="Yamaguchi S."/>
            <person name="Fujioka T."/>
            <person name="Kawai K."/>
            <person name="Gomi K."/>
            <person name="Machida M."/>
            <person name="Abe K."/>
        </authorList>
    </citation>
    <scope>NUCLEOTIDE SEQUENCE [GENOMIC DNA]</scope>
    <scope>FUNCTION</scope>
    <scope>PATHWAY</scope>
    <source>
        <strain>BAUA-2787</strain>
    </source>
</reference>
<reference key="2">
    <citation type="journal article" date="2022" name="Front. Fungal Biol.">
        <title>Discovery of a gene cluster for the biosynthesis of novel cyclic peptide compound, KK-1, in Curvularia clavata.</title>
        <authorList>
            <person name="Yamaguchi S."/>
            <person name="Fujioka T."/>
            <person name="Yoshimi A."/>
            <person name="Kumagai T."/>
            <person name="Umemura M."/>
            <person name="Abe K."/>
            <person name="Machida M."/>
            <person name="Kawai K."/>
        </authorList>
    </citation>
    <scope>FUNCTION</scope>
    <scope>INDUCTION</scope>
    <scope>DISRUPTION PHENOTYPE</scope>
    <scope>PATHWAY</scope>
</reference>
<feature type="chain" id="PRO_0000450435" description="KK-1 biosynthesis cluster protein D">
    <location>
        <begin position="1"/>
        <end position="996"/>
    </location>
</feature>
<feature type="region of interest" description="Disordered" evidence="1">
    <location>
        <begin position="307"/>
        <end position="333"/>
    </location>
</feature>
<feature type="region of interest" description="Disordered" evidence="1">
    <location>
        <begin position="425"/>
        <end position="449"/>
    </location>
</feature>
<feature type="region of interest" description="Disordered" evidence="1">
    <location>
        <begin position="489"/>
        <end position="556"/>
    </location>
</feature>
<feature type="region of interest" description="Disordered" evidence="1">
    <location>
        <begin position="571"/>
        <end position="602"/>
    </location>
</feature>
<feature type="compositionally biased region" description="Polar residues" evidence="1">
    <location>
        <begin position="318"/>
        <end position="329"/>
    </location>
</feature>
<feature type="compositionally biased region" description="Polar residues" evidence="1">
    <location>
        <begin position="428"/>
        <end position="439"/>
    </location>
</feature>
<feature type="compositionally biased region" description="Basic and acidic residues" evidence="1">
    <location>
        <begin position="440"/>
        <end position="449"/>
    </location>
</feature>
<feature type="compositionally biased region" description="Basic and acidic residues" evidence="1">
    <location>
        <begin position="500"/>
        <end position="527"/>
    </location>
</feature>
<feature type="compositionally biased region" description="Polar residues" evidence="1">
    <location>
        <begin position="572"/>
        <end position="590"/>
    </location>
</feature>
<evidence type="ECO:0000256" key="1">
    <source>
        <dbReference type="SAM" id="MobiDB-lite"/>
    </source>
</evidence>
<evidence type="ECO:0000269" key="2">
    <source>
    </source>
</evidence>
<evidence type="ECO:0000269" key="3">
    <source>
    </source>
</evidence>
<evidence type="ECO:0000303" key="4">
    <source>
    </source>
</evidence>
<evidence type="ECO:0000303" key="5">
    <source>
    </source>
</evidence>
<evidence type="ECO:0000305" key="6">
    <source>
    </source>
</evidence>
<accession>A0A348AXX6</accession>
<gene>
    <name evidence="4" type="primary">kk1D</name>
    <name evidence="5" type="synonym">TR03</name>
    <name type="ORF">TRAF135003</name>
</gene>
<name>KK1D_CURCL</name>
<protein>
    <recommendedName>
        <fullName evidence="5">KK-1 biosynthesis cluster protein D</fullName>
    </recommendedName>
</protein>
<organism>
    <name type="scientific">Curvularia clavata</name>
    <dbReference type="NCBI Taxonomy" id="95742"/>
    <lineage>
        <taxon>Eukaryota</taxon>
        <taxon>Fungi</taxon>
        <taxon>Dikarya</taxon>
        <taxon>Ascomycota</taxon>
        <taxon>Pezizomycotina</taxon>
        <taxon>Dothideomycetes</taxon>
        <taxon>Pleosporomycetidae</taxon>
        <taxon>Pleosporales</taxon>
        <taxon>Pleosporineae</taxon>
        <taxon>Pleosporaceae</taxon>
        <taxon>Curvularia</taxon>
    </lineage>
</organism>
<dbReference type="EMBL" id="LC371755">
    <property type="protein sequence ID" value="BBC83959.1"/>
    <property type="molecule type" value="Genomic_DNA"/>
</dbReference>
<dbReference type="VEuPathDB" id="FungiDB:yc1106_06628"/>
<dbReference type="GO" id="GO:0017000">
    <property type="term" value="P:antibiotic biosynthetic process"/>
    <property type="evidence" value="ECO:0007669"/>
    <property type="project" value="UniProtKB-KW"/>
</dbReference>
<dbReference type="SUPFAM" id="SSF51197">
    <property type="entry name" value="Clavaminate synthase-like"/>
    <property type="match status" value="1"/>
</dbReference>
<sequence length="996" mass="110139">MALQERRAAVTSSDILSAHAISSPALAAAAINFAASFHRDARTCCSAHERSQLQKVYRDKILANDKFTANIAAAFLSVLGPNAGRNDAGAERERWGDFDRLAQRGKNMRDRESQHLQHQSGIIAAWGPRCFEYYGWHVLPLPLLRQVHDLAVLIPSWDDAVELLNSRMLLRHELRVLHGNNKALRIGEHSAASKVQDSRSPVERTDIVAALDWARANATSAAARQAVKEAAQGMNGTPINTFGLKRDCYGMVVPSVGPYDPDGDDDNDEDVVDVSPRPAKHIKLSAAEPLRLMFPGSLSHVQACQRHDTDGEKASTAPIRSNKLSQSKQPELDTAAESLRTRHIHNERINEPLDEVSDCSLSLQTIAVGGGSAQEETPDQDVEHAHPEVEITSAISSELRKVDERTDGIRIGRVIMRRSHCMVREQDNQTNEEGTGEVQSQRDRRARDLGKDMETDMDIDSQLEEMLDIHALEAQRNHEEMSDGEDVVAGVAGPGTPTHRAAEEGGCREKEAENAKTDEEQVQDKAALDQAGNTNTNREVENAAPKAHSQEGALRASRTGTIVERTVELHSTHSIHQRASVNTTAPTVARSSDSDDSDSLHSPTALQNLQAYIDTRTHQLTQVLSQLNSTPDVRHHAQLQLDWLSPQRWASVYVEPEHHMGATSSASSDSADIWCLDWDTFHQYADSNHVFRRPVVIKQKFQDSGMYEVDRYVDMLWQRFPEQHIEVQNSITGTSRLMSMAEYCSTALTVTEAGTSLSDNTTSVSNAVNLRCLARADEPLLTRLERFQLLSTLASRVAGTIGRTEHSPPSNLESLLGFDALSFADAFSSSHANLFGGSWVRCLDGLKIYAIAADLDAEDWRRFADEGYKWSPRGKGRLIALEEDDVLFIPPGLRAIHASFTPEPCLMEGGMLWDECAIPEILDELLWIARHQAGTVQPLEFQLSSLIDALEQWLNENNHINQSSPSHTAAEERQTLKASIQSLRDCLSGRSAAFPS</sequence>